<gene>
    <name evidence="1" type="primary">pheS</name>
    <name type="ordered locus">Sde_1581</name>
</gene>
<evidence type="ECO:0000255" key="1">
    <source>
        <dbReference type="HAMAP-Rule" id="MF_00281"/>
    </source>
</evidence>
<accession>Q21KD6</accession>
<keyword id="KW-0030">Aminoacyl-tRNA synthetase</keyword>
<keyword id="KW-0067">ATP-binding</keyword>
<keyword id="KW-0963">Cytoplasm</keyword>
<keyword id="KW-0436">Ligase</keyword>
<keyword id="KW-0460">Magnesium</keyword>
<keyword id="KW-0479">Metal-binding</keyword>
<keyword id="KW-0547">Nucleotide-binding</keyword>
<keyword id="KW-0648">Protein biosynthesis</keyword>
<keyword id="KW-1185">Reference proteome</keyword>
<proteinExistence type="inferred from homology"/>
<organism>
    <name type="scientific">Saccharophagus degradans (strain 2-40 / ATCC 43961 / DSM 17024)</name>
    <dbReference type="NCBI Taxonomy" id="203122"/>
    <lineage>
        <taxon>Bacteria</taxon>
        <taxon>Pseudomonadati</taxon>
        <taxon>Pseudomonadota</taxon>
        <taxon>Gammaproteobacteria</taxon>
        <taxon>Cellvibrionales</taxon>
        <taxon>Cellvibrionaceae</taxon>
        <taxon>Saccharophagus</taxon>
    </lineage>
</organism>
<sequence length="337" mass="37233">MENLKALTEQALAEVAKTEDLAGLDAIRVNYLGKKGEITAQLKNLGGLSPEERPAAGAKINEAKQLVQNHISERKAALEAQAISAKLAAESIDVTLAGRQPEVGGLHPVTRTLRRISEIFTAVGYDVAEGPEIEDDFHNFEALNIPGHHPARAMHDTFYISPSHVLRTHTSPVQVRTMKSQEPPIKVICPGRVYRCDSDLTHTPMFHQVEGLVVDKNVSFADLKGTVDQFLKSFFEADVPVRFRPSYFPFTEPSAEVDIQCTNCGGEGCRICKQTGWLEIMGCGMVHPKVFESCGVDAEEYTGLAFGIGVERLAMLRYGVNDLRLFFENDLDFLNQF</sequence>
<name>SYFA_SACD2</name>
<comment type="catalytic activity">
    <reaction evidence="1">
        <text>tRNA(Phe) + L-phenylalanine + ATP = L-phenylalanyl-tRNA(Phe) + AMP + diphosphate + H(+)</text>
        <dbReference type="Rhea" id="RHEA:19413"/>
        <dbReference type="Rhea" id="RHEA-COMP:9668"/>
        <dbReference type="Rhea" id="RHEA-COMP:9699"/>
        <dbReference type="ChEBI" id="CHEBI:15378"/>
        <dbReference type="ChEBI" id="CHEBI:30616"/>
        <dbReference type="ChEBI" id="CHEBI:33019"/>
        <dbReference type="ChEBI" id="CHEBI:58095"/>
        <dbReference type="ChEBI" id="CHEBI:78442"/>
        <dbReference type="ChEBI" id="CHEBI:78531"/>
        <dbReference type="ChEBI" id="CHEBI:456215"/>
        <dbReference type="EC" id="6.1.1.20"/>
    </reaction>
</comment>
<comment type="cofactor">
    <cofactor evidence="1">
        <name>Mg(2+)</name>
        <dbReference type="ChEBI" id="CHEBI:18420"/>
    </cofactor>
    <text evidence="1">Binds 2 magnesium ions per tetramer.</text>
</comment>
<comment type="subunit">
    <text evidence="1">Tetramer of two alpha and two beta subunits.</text>
</comment>
<comment type="subcellular location">
    <subcellularLocation>
        <location evidence="1">Cytoplasm</location>
    </subcellularLocation>
</comment>
<comment type="similarity">
    <text evidence="1">Belongs to the class-II aminoacyl-tRNA synthetase family. Phe-tRNA synthetase alpha subunit type 1 subfamily.</text>
</comment>
<feature type="chain" id="PRO_1000006891" description="Phenylalanine--tRNA ligase alpha subunit">
    <location>
        <begin position="1"/>
        <end position="337"/>
    </location>
</feature>
<feature type="binding site" evidence="1">
    <location>
        <position position="252"/>
    </location>
    <ligand>
        <name>Mg(2+)</name>
        <dbReference type="ChEBI" id="CHEBI:18420"/>
        <note>shared with beta subunit</note>
    </ligand>
</feature>
<protein>
    <recommendedName>
        <fullName evidence="1">Phenylalanine--tRNA ligase alpha subunit</fullName>
        <ecNumber evidence="1">6.1.1.20</ecNumber>
    </recommendedName>
    <alternativeName>
        <fullName evidence="1">Phenylalanyl-tRNA synthetase alpha subunit</fullName>
        <shortName evidence="1">PheRS</shortName>
    </alternativeName>
</protein>
<dbReference type="EC" id="6.1.1.20" evidence="1"/>
<dbReference type="EMBL" id="CP000282">
    <property type="protein sequence ID" value="ABD80843.1"/>
    <property type="molecule type" value="Genomic_DNA"/>
</dbReference>
<dbReference type="RefSeq" id="WP_011468063.1">
    <property type="nucleotide sequence ID" value="NC_007912.1"/>
</dbReference>
<dbReference type="SMR" id="Q21KD6"/>
<dbReference type="STRING" id="203122.Sde_1581"/>
<dbReference type="GeneID" id="98613257"/>
<dbReference type="KEGG" id="sde:Sde_1581"/>
<dbReference type="eggNOG" id="COG0016">
    <property type="taxonomic scope" value="Bacteria"/>
</dbReference>
<dbReference type="HOGENOM" id="CLU_025086_0_1_6"/>
<dbReference type="OrthoDB" id="9800719at2"/>
<dbReference type="Proteomes" id="UP000001947">
    <property type="component" value="Chromosome"/>
</dbReference>
<dbReference type="GO" id="GO:0005737">
    <property type="term" value="C:cytoplasm"/>
    <property type="evidence" value="ECO:0007669"/>
    <property type="project" value="UniProtKB-SubCell"/>
</dbReference>
<dbReference type="GO" id="GO:0005524">
    <property type="term" value="F:ATP binding"/>
    <property type="evidence" value="ECO:0007669"/>
    <property type="project" value="UniProtKB-UniRule"/>
</dbReference>
<dbReference type="GO" id="GO:0000287">
    <property type="term" value="F:magnesium ion binding"/>
    <property type="evidence" value="ECO:0007669"/>
    <property type="project" value="UniProtKB-UniRule"/>
</dbReference>
<dbReference type="GO" id="GO:0004826">
    <property type="term" value="F:phenylalanine-tRNA ligase activity"/>
    <property type="evidence" value="ECO:0007669"/>
    <property type="project" value="UniProtKB-UniRule"/>
</dbReference>
<dbReference type="GO" id="GO:0000049">
    <property type="term" value="F:tRNA binding"/>
    <property type="evidence" value="ECO:0007669"/>
    <property type="project" value="InterPro"/>
</dbReference>
<dbReference type="GO" id="GO:0006432">
    <property type="term" value="P:phenylalanyl-tRNA aminoacylation"/>
    <property type="evidence" value="ECO:0007669"/>
    <property type="project" value="UniProtKB-UniRule"/>
</dbReference>
<dbReference type="CDD" id="cd00496">
    <property type="entry name" value="PheRS_alpha_core"/>
    <property type="match status" value="1"/>
</dbReference>
<dbReference type="FunFam" id="3.30.930.10:FF:000003">
    <property type="entry name" value="Phenylalanine--tRNA ligase alpha subunit"/>
    <property type="match status" value="1"/>
</dbReference>
<dbReference type="Gene3D" id="3.30.930.10">
    <property type="entry name" value="Bira Bifunctional Protein, Domain 2"/>
    <property type="match status" value="1"/>
</dbReference>
<dbReference type="HAMAP" id="MF_00281">
    <property type="entry name" value="Phe_tRNA_synth_alpha1"/>
    <property type="match status" value="1"/>
</dbReference>
<dbReference type="InterPro" id="IPR006195">
    <property type="entry name" value="aa-tRNA-synth_II"/>
</dbReference>
<dbReference type="InterPro" id="IPR045864">
    <property type="entry name" value="aa-tRNA-synth_II/BPL/LPL"/>
</dbReference>
<dbReference type="InterPro" id="IPR004529">
    <property type="entry name" value="Phe-tRNA-synth_IIc_asu"/>
</dbReference>
<dbReference type="InterPro" id="IPR004188">
    <property type="entry name" value="Phe-tRNA_ligase_II_N"/>
</dbReference>
<dbReference type="InterPro" id="IPR022911">
    <property type="entry name" value="Phe_tRNA_ligase_alpha1_bac"/>
</dbReference>
<dbReference type="InterPro" id="IPR002319">
    <property type="entry name" value="Phenylalanyl-tRNA_Synthase"/>
</dbReference>
<dbReference type="InterPro" id="IPR010978">
    <property type="entry name" value="tRNA-bd_arm"/>
</dbReference>
<dbReference type="NCBIfam" id="TIGR00468">
    <property type="entry name" value="pheS"/>
    <property type="match status" value="1"/>
</dbReference>
<dbReference type="PANTHER" id="PTHR11538:SF41">
    <property type="entry name" value="PHENYLALANINE--TRNA LIGASE, MITOCHONDRIAL"/>
    <property type="match status" value="1"/>
</dbReference>
<dbReference type="PANTHER" id="PTHR11538">
    <property type="entry name" value="PHENYLALANYL-TRNA SYNTHETASE"/>
    <property type="match status" value="1"/>
</dbReference>
<dbReference type="Pfam" id="PF02912">
    <property type="entry name" value="Phe_tRNA-synt_N"/>
    <property type="match status" value="1"/>
</dbReference>
<dbReference type="Pfam" id="PF01409">
    <property type="entry name" value="tRNA-synt_2d"/>
    <property type="match status" value="1"/>
</dbReference>
<dbReference type="SUPFAM" id="SSF55681">
    <property type="entry name" value="Class II aaRS and biotin synthetases"/>
    <property type="match status" value="1"/>
</dbReference>
<dbReference type="SUPFAM" id="SSF46589">
    <property type="entry name" value="tRNA-binding arm"/>
    <property type="match status" value="1"/>
</dbReference>
<dbReference type="PROSITE" id="PS50862">
    <property type="entry name" value="AA_TRNA_LIGASE_II"/>
    <property type="match status" value="1"/>
</dbReference>
<reference key="1">
    <citation type="journal article" date="2008" name="PLoS Genet.">
        <title>Complete genome sequence of the complex carbohydrate-degrading marine bacterium, Saccharophagus degradans strain 2-40 T.</title>
        <authorList>
            <person name="Weiner R.M."/>
            <person name="Taylor L.E. II"/>
            <person name="Henrissat B."/>
            <person name="Hauser L."/>
            <person name="Land M."/>
            <person name="Coutinho P.M."/>
            <person name="Rancurel C."/>
            <person name="Saunders E.H."/>
            <person name="Longmire A.G."/>
            <person name="Zhang H."/>
            <person name="Bayer E.A."/>
            <person name="Gilbert H.J."/>
            <person name="Larimer F."/>
            <person name="Zhulin I.B."/>
            <person name="Ekborg N.A."/>
            <person name="Lamed R."/>
            <person name="Richardson P.M."/>
            <person name="Borovok I."/>
            <person name="Hutcheson S."/>
        </authorList>
    </citation>
    <scope>NUCLEOTIDE SEQUENCE [LARGE SCALE GENOMIC DNA]</scope>
    <source>
        <strain>2-40 / ATCC 43961 / DSM 17024</strain>
    </source>
</reference>